<comment type="function">
    <text evidence="1">With TolR probably plays a role in maintaining the position of the peptidoglycan cell wall in the periplasm. Acts as a porin with low permeability that allows slow penetration of small solutes; an internal gate slows down solute passage.</text>
</comment>
<comment type="subunit">
    <text evidence="1">Monomer and homodimer.</text>
</comment>
<comment type="subcellular location">
    <subcellularLocation>
        <location evidence="1 2">Cell outer membrane</location>
        <topology evidence="1 2">Multi-pass membrane protein</topology>
    </subcellularLocation>
</comment>
<comment type="domain">
    <text evidence="1">The extracellular loops are most variable in sequence, and in some bacteria confer sensitivity to phage and/or colicins.</text>
</comment>
<comment type="similarity">
    <text evidence="4">Belongs to the outer membrane OOP (TC 1.B.6) superfamily. OmpA family.</text>
</comment>
<name>OMPA_ACTLI</name>
<keyword id="KW-0998">Cell outer membrane</keyword>
<keyword id="KW-0903">Direct protein sequencing</keyword>
<keyword id="KW-0406">Ion transport</keyword>
<keyword id="KW-0472">Membrane</keyword>
<keyword id="KW-0626">Porin</keyword>
<keyword id="KW-0812">Transmembrane</keyword>
<keyword id="KW-1134">Transmembrane beta strand</keyword>
<keyword id="KW-0813">Transport</keyword>
<dbReference type="GO" id="GO:0009279">
    <property type="term" value="C:cell outer membrane"/>
    <property type="evidence" value="ECO:0007669"/>
    <property type="project" value="UniProtKB-SubCell"/>
</dbReference>
<dbReference type="GO" id="GO:0046930">
    <property type="term" value="C:pore complex"/>
    <property type="evidence" value="ECO:0007669"/>
    <property type="project" value="UniProtKB-KW"/>
</dbReference>
<dbReference type="GO" id="GO:0015288">
    <property type="term" value="F:porin activity"/>
    <property type="evidence" value="ECO:0007669"/>
    <property type="project" value="UniProtKB-KW"/>
</dbReference>
<dbReference type="GO" id="GO:0006811">
    <property type="term" value="P:monoatomic ion transport"/>
    <property type="evidence" value="ECO:0007669"/>
    <property type="project" value="UniProtKB-KW"/>
</dbReference>
<dbReference type="Gene3D" id="2.40.160.20">
    <property type="match status" value="1"/>
</dbReference>
<dbReference type="InterPro" id="IPR000498">
    <property type="entry name" value="OmpA-like_TM_dom"/>
</dbReference>
<dbReference type="Pfam" id="PF01389">
    <property type="entry name" value="OmpA_membrane"/>
    <property type="match status" value="1"/>
</dbReference>
<feature type="chain" id="PRO_0000196257" description="Outer membrane protein A">
    <location>
        <begin position="1"/>
        <end position="21" status="greater than"/>
    </location>
</feature>
<feature type="transmembrane region" description="Beta stranded" evidence="1">
    <location>
        <begin position="6"/>
        <end position="16"/>
    </location>
</feature>
<feature type="non-terminal residue" evidence="3">
    <location>
        <position position="21"/>
    </location>
</feature>
<protein>
    <recommendedName>
        <fullName evidence="3">Outer membrane protein A</fullName>
    </recommendedName>
    <alternativeName>
        <fullName>Major outer membrane protein</fullName>
        <shortName>MOMP</shortName>
    </alternativeName>
</protein>
<accession>P80444</accession>
<organism evidence="4">
    <name type="scientific">Actinobacillus lignieresii</name>
    <dbReference type="NCBI Taxonomy" id="720"/>
    <lineage>
        <taxon>Bacteria</taxon>
        <taxon>Pseudomonadati</taxon>
        <taxon>Pseudomonadota</taxon>
        <taxon>Gammaproteobacteria</taxon>
        <taxon>Pasteurellales</taxon>
        <taxon>Pasteurellaceae</taxon>
        <taxon>Actinobacillus</taxon>
    </lineage>
</organism>
<reference evidence="4" key="1">
    <citation type="journal article" date="1996" name="Zentralbl. Bakteriol.">
        <title>Serological and biochemical properties of the major outer membrane protein within strains of the genus Actinobacillus.</title>
        <authorList>
            <person name="Hartmann L."/>
            <person name="Schroeder W."/>
            <person name="Luebke-Becker A."/>
        </authorList>
    </citation>
    <scope>PROTEIN SEQUENCE</scope>
    <scope>SUBCELLULAR LOCATION</scope>
    <source>
        <strain evidence="2">R 653</strain>
    </source>
</reference>
<gene>
    <name evidence="3" type="primary">ompA</name>
</gene>
<sequence>APKDDTWYTGAKLGWSQYHDT</sequence>
<proteinExistence type="evidence at protein level"/>
<evidence type="ECO:0000250" key="1">
    <source>
        <dbReference type="UniProtKB" id="P0A910"/>
    </source>
</evidence>
<evidence type="ECO:0000269" key="2">
    <source>
    </source>
</evidence>
<evidence type="ECO:0000303" key="3">
    <source>
    </source>
</evidence>
<evidence type="ECO:0000305" key="4"/>